<evidence type="ECO:0000250" key="1"/>
<evidence type="ECO:0000255" key="2">
    <source>
        <dbReference type="PROSITE-ProRule" id="PRU01083"/>
    </source>
</evidence>
<evidence type="ECO:0000305" key="3"/>
<keyword id="KW-0378">Hydrolase</keyword>
<keyword id="KW-0479">Metal-binding</keyword>
<keyword id="KW-1185">Reference proteome</keyword>
<keyword id="KW-0862">Zinc</keyword>
<protein>
    <recommendedName>
        <fullName>Cytidine deaminase 6</fullName>
        <ecNumber>3.5.4.5</ecNumber>
    </recommendedName>
</protein>
<reference key="1">
    <citation type="submission" date="1999-01" db="EMBL/GenBank/DDBJ databases">
        <title>Cytidine deaminases in Arabidopsis thaliana: a gene family of eight members are located within a 24 kb region.</title>
        <authorList>
            <person name="Sanchez H."/>
            <person name="Schuster W."/>
        </authorList>
    </citation>
    <scope>NUCLEOTIDE SEQUENCE [GENOMIC DNA]</scope>
    <source>
        <strain>cv. Columbia</strain>
    </source>
</reference>
<reference key="2">
    <citation type="submission" date="1999-06" db="EMBL/GenBank/DDBJ databases">
        <title>Cloning and characterisation of a cytidine deaminase gene family from Arabidopsis thaliana.</title>
        <authorList>
            <person name="Faivre-Nitschke S.E."/>
            <person name="Grienenberger J.M."/>
            <person name="Gualberto J.M."/>
        </authorList>
    </citation>
    <scope>NUCLEOTIDE SEQUENCE [GENOMIC DNA]</scope>
    <source>
        <strain>cv. Landsberg erecta</strain>
    </source>
</reference>
<reference key="3">
    <citation type="journal article" date="1999" name="Nature">
        <title>Sequence and analysis of chromosome 4 of the plant Arabidopsis thaliana.</title>
        <authorList>
            <person name="Mayer K.F.X."/>
            <person name="Schueller C."/>
            <person name="Wambutt R."/>
            <person name="Murphy G."/>
            <person name="Volckaert G."/>
            <person name="Pohl T."/>
            <person name="Duesterhoeft A."/>
            <person name="Stiekema W."/>
            <person name="Entian K.-D."/>
            <person name="Terryn N."/>
            <person name="Harris B."/>
            <person name="Ansorge W."/>
            <person name="Brandt P."/>
            <person name="Grivell L.A."/>
            <person name="Rieger M."/>
            <person name="Weichselgartner M."/>
            <person name="de Simone V."/>
            <person name="Obermaier B."/>
            <person name="Mache R."/>
            <person name="Mueller M."/>
            <person name="Kreis M."/>
            <person name="Delseny M."/>
            <person name="Puigdomenech P."/>
            <person name="Watson M."/>
            <person name="Schmidtheini T."/>
            <person name="Reichert B."/>
            <person name="Portetelle D."/>
            <person name="Perez-Alonso M."/>
            <person name="Boutry M."/>
            <person name="Bancroft I."/>
            <person name="Vos P."/>
            <person name="Hoheisel J."/>
            <person name="Zimmermann W."/>
            <person name="Wedler H."/>
            <person name="Ridley P."/>
            <person name="Langham S.-A."/>
            <person name="McCullagh B."/>
            <person name="Bilham L."/>
            <person name="Robben J."/>
            <person name="van der Schueren J."/>
            <person name="Grymonprez B."/>
            <person name="Chuang Y.-J."/>
            <person name="Vandenbussche F."/>
            <person name="Braeken M."/>
            <person name="Weltjens I."/>
            <person name="Voet M."/>
            <person name="Bastiaens I."/>
            <person name="Aert R."/>
            <person name="Defoor E."/>
            <person name="Weitzenegger T."/>
            <person name="Bothe G."/>
            <person name="Ramsperger U."/>
            <person name="Hilbert H."/>
            <person name="Braun M."/>
            <person name="Holzer E."/>
            <person name="Brandt A."/>
            <person name="Peters S."/>
            <person name="van Staveren M."/>
            <person name="Dirkse W."/>
            <person name="Mooijman P."/>
            <person name="Klein Lankhorst R."/>
            <person name="Rose M."/>
            <person name="Hauf J."/>
            <person name="Koetter P."/>
            <person name="Berneiser S."/>
            <person name="Hempel S."/>
            <person name="Feldpausch M."/>
            <person name="Lamberth S."/>
            <person name="Van den Daele H."/>
            <person name="De Keyser A."/>
            <person name="Buysshaert C."/>
            <person name="Gielen J."/>
            <person name="Villarroel R."/>
            <person name="De Clercq R."/>
            <person name="van Montagu M."/>
            <person name="Rogers J."/>
            <person name="Cronin A."/>
            <person name="Quail M.A."/>
            <person name="Bray-Allen S."/>
            <person name="Clark L."/>
            <person name="Doggett J."/>
            <person name="Hall S."/>
            <person name="Kay M."/>
            <person name="Lennard N."/>
            <person name="McLay K."/>
            <person name="Mayes R."/>
            <person name="Pettett A."/>
            <person name="Rajandream M.A."/>
            <person name="Lyne M."/>
            <person name="Benes V."/>
            <person name="Rechmann S."/>
            <person name="Borkova D."/>
            <person name="Bloecker H."/>
            <person name="Scharfe M."/>
            <person name="Grimm M."/>
            <person name="Loehnert T.-H."/>
            <person name="Dose S."/>
            <person name="de Haan M."/>
            <person name="Maarse A.C."/>
            <person name="Schaefer M."/>
            <person name="Mueller-Auer S."/>
            <person name="Gabel C."/>
            <person name="Fuchs M."/>
            <person name="Fartmann B."/>
            <person name="Granderath K."/>
            <person name="Dauner D."/>
            <person name="Herzl A."/>
            <person name="Neumann S."/>
            <person name="Argiriou A."/>
            <person name="Vitale D."/>
            <person name="Liguori R."/>
            <person name="Piravandi E."/>
            <person name="Massenet O."/>
            <person name="Quigley F."/>
            <person name="Clabauld G."/>
            <person name="Muendlein A."/>
            <person name="Felber R."/>
            <person name="Schnabl S."/>
            <person name="Hiller R."/>
            <person name="Schmidt W."/>
            <person name="Lecharny A."/>
            <person name="Aubourg S."/>
            <person name="Chefdor F."/>
            <person name="Cooke R."/>
            <person name="Berger C."/>
            <person name="Monfort A."/>
            <person name="Casacuberta E."/>
            <person name="Gibbons T."/>
            <person name="Weber N."/>
            <person name="Vandenbol M."/>
            <person name="Bargues M."/>
            <person name="Terol J."/>
            <person name="Torres A."/>
            <person name="Perez-Perez A."/>
            <person name="Purnelle B."/>
            <person name="Bent E."/>
            <person name="Johnson S."/>
            <person name="Tacon D."/>
            <person name="Jesse T."/>
            <person name="Heijnen L."/>
            <person name="Schwarz S."/>
            <person name="Scholler P."/>
            <person name="Heber S."/>
            <person name="Francs P."/>
            <person name="Bielke C."/>
            <person name="Frishman D."/>
            <person name="Haase D."/>
            <person name="Lemcke K."/>
            <person name="Mewes H.-W."/>
            <person name="Stocker S."/>
            <person name="Zaccaria P."/>
            <person name="Bevan M."/>
            <person name="Wilson R.K."/>
            <person name="de la Bastide M."/>
            <person name="Habermann K."/>
            <person name="Parnell L."/>
            <person name="Dedhia N."/>
            <person name="Gnoj L."/>
            <person name="Schutz K."/>
            <person name="Huang E."/>
            <person name="Spiegel L."/>
            <person name="Sekhon M."/>
            <person name="Murray J."/>
            <person name="Sheet P."/>
            <person name="Cordes M."/>
            <person name="Abu-Threideh J."/>
            <person name="Stoneking T."/>
            <person name="Kalicki J."/>
            <person name="Graves T."/>
            <person name="Harmon G."/>
            <person name="Edwards J."/>
            <person name="Latreille P."/>
            <person name="Courtney L."/>
            <person name="Cloud J."/>
            <person name="Abbott A."/>
            <person name="Scott K."/>
            <person name="Johnson D."/>
            <person name="Minx P."/>
            <person name="Bentley D."/>
            <person name="Fulton B."/>
            <person name="Miller N."/>
            <person name="Greco T."/>
            <person name="Kemp K."/>
            <person name="Kramer J."/>
            <person name="Fulton L."/>
            <person name="Mardis E."/>
            <person name="Dante M."/>
            <person name="Pepin K."/>
            <person name="Hillier L.W."/>
            <person name="Nelson J."/>
            <person name="Spieth J."/>
            <person name="Ryan E."/>
            <person name="Andrews S."/>
            <person name="Geisel C."/>
            <person name="Layman D."/>
            <person name="Du H."/>
            <person name="Ali J."/>
            <person name="Berghoff A."/>
            <person name="Jones K."/>
            <person name="Drone K."/>
            <person name="Cotton M."/>
            <person name="Joshu C."/>
            <person name="Antonoiu B."/>
            <person name="Zidanic M."/>
            <person name="Strong C."/>
            <person name="Sun H."/>
            <person name="Lamar B."/>
            <person name="Yordan C."/>
            <person name="Ma P."/>
            <person name="Zhong J."/>
            <person name="Preston R."/>
            <person name="Vil D."/>
            <person name="Shekher M."/>
            <person name="Matero A."/>
            <person name="Shah R."/>
            <person name="Swaby I.K."/>
            <person name="O'Shaughnessy A."/>
            <person name="Rodriguez M."/>
            <person name="Hoffman J."/>
            <person name="Till S."/>
            <person name="Granat S."/>
            <person name="Shohdy N."/>
            <person name="Hasegawa A."/>
            <person name="Hameed A."/>
            <person name="Lodhi M."/>
            <person name="Johnson A."/>
            <person name="Chen E."/>
            <person name="Marra M.A."/>
            <person name="Martienssen R."/>
            <person name="McCombie W.R."/>
        </authorList>
    </citation>
    <scope>NUCLEOTIDE SEQUENCE [LARGE SCALE GENOMIC DNA]</scope>
    <source>
        <strain>cv. Columbia</strain>
    </source>
</reference>
<reference key="4">
    <citation type="journal article" date="2017" name="Plant J.">
        <title>Araport11: a complete reannotation of the Arabidopsis thaliana reference genome.</title>
        <authorList>
            <person name="Cheng C.Y."/>
            <person name="Krishnakumar V."/>
            <person name="Chan A.P."/>
            <person name="Thibaud-Nissen F."/>
            <person name="Schobel S."/>
            <person name="Town C.D."/>
        </authorList>
    </citation>
    <scope>GENOME REANNOTATION</scope>
    <source>
        <strain>cv. Columbia</strain>
    </source>
</reference>
<feature type="chain" id="PRO_0000429148" description="Cytidine deaminase 6">
    <location>
        <begin position="1"/>
        <end position="293"/>
    </location>
</feature>
<feature type="domain" description="CMP/dCMP-type deaminase 1" evidence="2">
    <location>
        <begin position="16"/>
        <end position="147"/>
    </location>
</feature>
<feature type="domain" description="CMP/dCMP-type deaminase 2" evidence="2">
    <location>
        <begin position="178"/>
        <end position="293"/>
    </location>
</feature>
<feature type="active site" description="Proton donor" evidence="1">
    <location>
        <position position="72"/>
    </location>
</feature>
<feature type="binding site" evidence="1">
    <location>
        <begin position="57"/>
        <end position="59"/>
    </location>
    <ligand>
        <name>substrate</name>
    </ligand>
</feature>
<feature type="binding site" evidence="1">
    <location>
        <position position="70"/>
    </location>
    <ligand>
        <name>Zn(2+)</name>
        <dbReference type="ChEBI" id="CHEBI:29105"/>
        <note>catalytic</note>
    </ligand>
</feature>
<feature type="binding site" evidence="1">
    <location>
        <position position="103"/>
    </location>
    <ligand>
        <name>Zn(2+)</name>
        <dbReference type="ChEBI" id="CHEBI:29105"/>
        <note>catalytic</note>
    </ligand>
</feature>
<feature type="binding site" evidence="1">
    <location>
        <position position="106"/>
    </location>
    <ligand>
        <name>Zn(2+)</name>
        <dbReference type="ChEBI" id="CHEBI:29105"/>
        <note>catalytic</note>
    </ligand>
</feature>
<feature type="sequence conflict" description="In Ref. 1; AAD30444." evidence="3" ref="1">
    <original>F</original>
    <variation>S</variation>
    <location>
        <position position="3"/>
    </location>
</feature>
<feature type="sequence conflict" description="In Ref. 1; AAD30444." evidence="3" ref="1">
    <original>V</original>
    <variation>C</variation>
    <location>
        <position position="15"/>
    </location>
</feature>
<feature type="sequence conflict" description="In Ref. 2; AAC69566." evidence="3" ref="2">
    <original>R</original>
    <variation>H</variation>
    <location>
        <position position="16"/>
    </location>
</feature>
<comment type="function">
    <text evidence="1">This enzyme scavenges exogenous and endogenous cytidine and 2'-deoxycytidine for UMP synthesis.</text>
</comment>
<comment type="catalytic activity">
    <reaction>
        <text>cytidine + H2O + H(+) = uridine + NH4(+)</text>
        <dbReference type="Rhea" id="RHEA:16069"/>
        <dbReference type="ChEBI" id="CHEBI:15377"/>
        <dbReference type="ChEBI" id="CHEBI:15378"/>
        <dbReference type="ChEBI" id="CHEBI:16704"/>
        <dbReference type="ChEBI" id="CHEBI:17562"/>
        <dbReference type="ChEBI" id="CHEBI:28938"/>
        <dbReference type="EC" id="3.5.4.5"/>
    </reaction>
</comment>
<comment type="catalytic activity">
    <reaction>
        <text>2'-deoxycytidine + H2O + H(+) = 2'-deoxyuridine + NH4(+)</text>
        <dbReference type="Rhea" id="RHEA:13433"/>
        <dbReference type="ChEBI" id="CHEBI:15377"/>
        <dbReference type="ChEBI" id="CHEBI:15378"/>
        <dbReference type="ChEBI" id="CHEBI:15698"/>
        <dbReference type="ChEBI" id="CHEBI:16450"/>
        <dbReference type="ChEBI" id="CHEBI:28938"/>
        <dbReference type="EC" id="3.5.4.5"/>
    </reaction>
</comment>
<comment type="cofactor">
    <cofactor evidence="1">
        <name>Zn(2+)</name>
        <dbReference type="ChEBI" id="CHEBI:29105"/>
    </cofactor>
    <text evidence="1">Binds 1 zinc ion per subunit.</text>
</comment>
<comment type="subunit">
    <text evidence="1">Homodimer.</text>
</comment>
<comment type="similarity">
    <text evidence="3">Belongs to the cytidine and deoxycytidylate deaminase family.</text>
</comment>
<sequence>MKFVYTPSEAAEEGVRGPSDLPKLIDKAMSLARAPVSTFKVGAVGLTSSGEVFLGVNVEFPNLPLHHTIHAEQFLVTNLALNSMKKLTHIAVSVTGTIFGAPCGHCRQFYQEMRNAPEIEILIKRPKDGIDEFMSLKSLMPERFGPDSILPEDASLLLEQRDNSLVLSDPEEICSDPEDCSHTKCRALAAANKSYAPYSKCPSGVALICGGEVYKGWYIESVAYNPSLGPVEAALVDFVARGGGKEFNEITEVVLVEMKDVKVSQEATARTFLDKIAPKCDFKVLHCYKTNKN</sequence>
<gene>
    <name type="primary">CDA6</name>
    <name type="synonym">DESD</name>
    <name type="ordered locus">At4g29610</name>
    <name type="ORF">T16L4.120</name>
</gene>
<proteinExistence type="inferred from homology"/>
<organism>
    <name type="scientific">Arabidopsis thaliana</name>
    <name type="common">Mouse-ear cress</name>
    <dbReference type="NCBI Taxonomy" id="3702"/>
    <lineage>
        <taxon>Eukaryota</taxon>
        <taxon>Viridiplantae</taxon>
        <taxon>Streptophyta</taxon>
        <taxon>Embryophyta</taxon>
        <taxon>Tracheophyta</taxon>
        <taxon>Spermatophyta</taxon>
        <taxon>Magnoliopsida</taxon>
        <taxon>eudicotyledons</taxon>
        <taxon>Gunneridae</taxon>
        <taxon>Pentapetalae</taxon>
        <taxon>rosids</taxon>
        <taxon>malvids</taxon>
        <taxon>Brassicales</taxon>
        <taxon>Brassicaceae</taxon>
        <taxon>Camelineae</taxon>
        <taxon>Arabidopsis</taxon>
    </lineage>
</organism>
<dbReference type="EC" id="3.5.4.5"/>
<dbReference type="EMBL" id="AF121877">
    <property type="protein sequence ID" value="AAD30444.1"/>
    <property type="molecule type" value="Genomic_DNA"/>
</dbReference>
<dbReference type="EMBL" id="AF080676">
    <property type="protein sequence ID" value="AAC69566.1"/>
    <property type="molecule type" value="Genomic_DNA"/>
</dbReference>
<dbReference type="EMBL" id="AL079344">
    <property type="protein sequence ID" value="CAB45321.1"/>
    <property type="molecule type" value="Genomic_DNA"/>
</dbReference>
<dbReference type="EMBL" id="AL161575">
    <property type="protein sequence ID" value="CAB79719.1"/>
    <property type="molecule type" value="Genomic_DNA"/>
</dbReference>
<dbReference type="EMBL" id="CP002687">
    <property type="protein sequence ID" value="AEE85651.1"/>
    <property type="molecule type" value="Genomic_DNA"/>
</dbReference>
<dbReference type="PIR" id="T09924">
    <property type="entry name" value="T09924"/>
</dbReference>
<dbReference type="RefSeq" id="NP_194690.1">
    <property type="nucleotide sequence ID" value="NM_119106.2"/>
</dbReference>
<dbReference type="SMR" id="Q9SU86"/>
<dbReference type="FunCoup" id="Q9SU86">
    <property type="interactions" value="132"/>
</dbReference>
<dbReference type="STRING" id="3702.Q9SU86"/>
<dbReference type="PaxDb" id="3702-AT4G29610.1"/>
<dbReference type="ProteomicsDB" id="224469"/>
<dbReference type="EnsemblPlants" id="AT4G29610.1">
    <property type="protein sequence ID" value="AT4G29610.1"/>
    <property type="gene ID" value="AT4G29610"/>
</dbReference>
<dbReference type="GeneID" id="829082"/>
<dbReference type="Gramene" id="AT4G29610.1">
    <property type="protein sequence ID" value="AT4G29610.1"/>
    <property type="gene ID" value="AT4G29610"/>
</dbReference>
<dbReference type="KEGG" id="ath:AT4G29610"/>
<dbReference type="Araport" id="AT4G29610"/>
<dbReference type="TAIR" id="AT4G29610"/>
<dbReference type="eggNOG" id="KOG0833">
    <property type="taxonomic scope" value="Eukaryota"/>
</dbReference>
<dbReference type="HOGENOM" id="CLU_052424_1_0_1"/>
<dbReference type="InParanoid" id="Q9SU86"/>
<dbReference type="OMA" id="YATTICA"/>
<dbReference type="PhylomeDB" id="Q9SU86"/>
<dbReference type="BioCyc" id="ARA:AT4G29610-MONOMER"/>
<dbReference type="PRO" id="PR:Q9SU86"/>
<dbReference type="Proteomes" id="UP000006548">
    <property type="component" value="Chromosome 4"/>
</dbReference>
<dbReference type="ExpressionAtlas" id="Q9SU86">
    <property type="expression patterns" value="baseline and differential"/>
</dbReference>
<dbReference type="GO" id="GO:0004126">
    <property type="term" value="F:cytidine deaminase activity"/>
    <property type="evidence" value="ECO:0007669"/>
    <property type="project" value="UniProtKB-EC"/>
</dbReference>
<dbReference type="GO" id="GO:0008270">
    <property type="term" value="F:zinc ion binding"/>
    <property type="evidence" value="ECO:0007669"/>
    <property type="project" value="InterPro"/>
</dbReference>
<dbReference type="GO" id="GO:0009972">
    <property type="term" value="P:cytidine deamination"/>
    <property type="evidence" value="ECO:0007669"/>
    <property type="project" value="InterPro"/>
</dbReference>
<dbReference type="CDD" id="cd01283">
    <property type="entry name" value="cytidine_deaminase"/>
    <property type="match status" value="2"/>
</dbReference>
<dbReference type="FunFam" id="3.40.140.10:FF:000006">
    <property type="entry name" value="Cytidine deaminase"/>
    <property type="match status" value="1"/>
</dbReference>
<dbReference type="FunFam" id="3.40.140.10:FF:000041">
    <property type="entry name" value="Cytidine deaminase"/>
    <property type="match status" value="1"/>
</dbReference>
<dbReference type="Gene3D" id="3.40.140.10">
    <property type="entry name" value="Cytidine Deaminase, domain 2"/>
    <property type="match status" value="2"/>
</dbReference>
<dbReference type="InterPro" id="IPR002125">
    <property type="entry name" value="CMP_dCMP_dom"/>
</dbReference>
<dbReference type="InterPro" id="IPR013171">
    <property type="entry name" value="Cyd/dCyd_deaminase_Zn-bd"/>
</dbReference>
<dbReference type="InterPro" id="IPR050202">
    <property type="entry name" value="Cyt/Deoxycyt_deaminase"/>
</dbReference>
<dbReference type="InterPro" id="IPR006263">
    <property type="entry name" value="Cyt_deam_dimer"/>
</dbReference>
<dbReference type="InterPro" id="IPR016193">
    <property type="entry name" value="Cytidine_deaminase-like"/>
</dbReference>
<dbReference type="NCBIfam" id="TIGR01355">
    <property type="entry name" value="cyt_deam_dimer"/>
    <property type="match status" value="1"/>
</dbReference>
<dbReference type="NCBIfam" id="NF006537">
    <property type="entry name" value="PRK09027.1"/>
    <property type="match status" value="1"/>
</dbReference>
<dbReference type="PANTHER" id="PTHR11644">
    <property type="entry name" value="CYTIDINE DEAMINASE"/>
    <property type="match status" value="1"/>
</dbReference>
<dbReference type="PANTHER" id="PTHR11644:SF2">
    <property type="entry name" value="CYTIDINE DEAMINASE"/>
    <property type="match status" value="1"/>
</dbReference>
<dbReference type="Pfam" id="PF00383">
    <property type="entry name" value="dCMP_cyt_deam_1"/>
    <property type="match status" value="1"/>
</dbReference>
<dbReference type="Pfam" id="PF08211">
    <property type="entry name" value="dCMP_cyt_deam_2"/>
    <property type="match status" value="1"/>
</dbReference>
<dbReference type="PIRSF" id="PIRSF006334">
    <property type="entry name" value="Cdd_plus_pseudo"/>
    <property type="match status" value="1"/>
</dbReference>
<dbReference type="SUPFAM" id="SSF53927">
    <property type="entry name" value="Cytidine deaminase-like"/>
    <property type="match status" value="2"/>
</dbReference>
<dbReference type="PROSITE" id="PS51747">
    <property type="entry name" value="CYT_DCMP_DEAMINASES_2"/>
    <property type="match status" value="2"/>
</dbReference>
<name>CDA6_ARATH</name>
<accession>Q9SU86</accession>
<accession>Q9SYU6</accession>
<accession>Q9ZT34</accession>